<organism>
    <name type="scientific">Cupriavidus taiwanensis (strain DSM 17343 / BCRC 17206 / CCUG 44338 / CIP 107171 / LMG 19424 / R1)</name>
    <name type="common">Ralstonia taiwanensis (strain LMG 19424)</name>
    <dbReference type="NCBI Taxonomy" id="977880"/>
    <lineage>
        <taxon>Bacteria</taxon>
        <taxon>Pseudomonadati</taxon>
        <taxon>Pseudomonadota</taxon>
        <taxon>Betaproteobacteria</taxon>
        <taxon>Burkholderiales</taxon>
        <taxon>Burkholderiaceae</taxon>
        <taxon>Cupriavidus</taxon>
    </lineage>
</organism>
<accession>B3R8D5</accession>
<comment type="function">
    <text evidence="1">Required for coenzyme pyrroloquinoline quinone (PQQ) biosynthesis. PQQ is probably formed by cross-linking a specific glutamate to a specific tyrosine residue and excising these residues from the peptide.</text>
</comment>
<comment type="pathway">
    <text evidence="1">Cofactor biosynthesis; pyrroloquinoline quinone biosynthesis.</text>
</comment>
<comment type="similarity">
    <text evidence="1">Belongs to the PqqA family.</text>
</comment>
<sequence length="24" mass="2879">MTWTTPAYTELRLGFEITMYIANR</sequence>
<keyword id="KW-0884">PQQ biosynthesis</keyword>
<name>PQQA_CUPTR</name>
<evidence type="ECO:0000255" key="1">
    <source>
        <dbReference type="HAMAP-Rule" id="MF_00656"/>
    </source>
</evidence>
<gene>
    <name evidence="1" type="primary">pqqA</name>
    <name type="ordered locus">RALTA_B0672</name>
</gene>
<dbReference type="EMBL" id="CU633750">
    <property type="protein sequence ID" value="CAQ71291.1"/>
    <property type="molecule type" value="Genomic_DNA"/>
</dbReference>
<dbReference type="RefSeq" id="WP_012355514.1">
    <property type="nucleotide sequence ID" value="NC_010530.1"/>
</dbReference>
<dbReference type="GeneID" id="29765379"/>
<dbReference type="KEGG" id="cti:RALTA_B0672"/>
<dbReference type="HOGENOM" id="CLU_219131_0_0_4"/>
<dbReference type="UniPathway" id="UPA00539"/>
<dbReference type="Proteomes" id="UP000001692">
    <property type="component" value="Chromosome 2"/>
</dbReference>
<dbReference type="GO" id="GO:0018189">
    <property type="term" value="P:pyrroloquinoline quinone biosynthetic process"/>
    <property type="evidence" value="ECO:0007669"/>
    <property type="project" value="UniProtKB-UniRule"/>
</dbReference>
<dbReference type="HAMAP" id="MF_00656">
    <property type="entry name" value="PQQ_syn_PqqA"/>
    <property type="match status" value="1"/>
</dbReference>
<dbReference type="InterPro" id="IPR011725">
    <property type="entry name" value="PQQ_synth_PqqA"/>
</dbReference>
<dbReference type="NCBIfam" id="TIGR02107">
    <property type="entry name" value="PQQ_syn_pqqA"/>
    <property type="match status" value="1"/>
</dbReference>
<dbReference type="Pfam" id="PF08042">
    <property type="entry name" value="PqqA"/>
    <property type="match status" value="1"/>
</dbReference>
<proteinExistence type="inferred from homology"/>
<protein>
    <recommendedName>
        <fullName evidence="1">Coenzyme PQQ synthesis protein A</fullName>
    </recommendedName>
    <alternativeName>
        <fullName evidence="1">Pyrroloquinoline quinone biosynthesis protein A</fullName>
    </alternativeName>
</protein>
<feature type="chain" id="PRO_1000131197" description="Coenzyme PQQ synthesis protein A">
    <location>
        <begin position="1"/>
        <end position="24"/>
    </location>
</feature>
<feature type="cross-link" description="Pyrroloquinoline quinone (Glu-Tyr)" evidence="1">
    <location>
        <begin position="16"/>
        <end position="20"/>
    </location>
</feature>
<reference key="1">
    <citation type="journal article" date="2008" name="Genome Res.">
        <title>Genome sequence of the beta-rhizobium Cupriavidus taiwanensis and comparative genomics of rhizobia.</title>
        <authorList>
            <person name="Amadou C."/>
            <person name="Pascal G."/>
            <person name="Mangenot S."/>
            <person name="Glew M."/>
            <person name="Bontemps C."/>
            <person name="Capela D."/>
            <person name="Carrere S."/>
            <person name="Cruveiller S."/>
            <person name="Dossat C."/>
            <person name="Lajus A."/>
            <person name="Marchetti M."/>
            <person name="Poinsot V."/>
            <person name="Rouy Z."/>
            <person name="Servin B."/>
            <person name="Saad M."/>
            <person name="Schenowitz C."/>
            <person name="Barbe V."/>
            <person name="Batut J."/>
            <person name="Medigue C."/>
            <person name="Masson-Boivin C."/>
        </authorList>
    </citation>
    <scope>NUCLEOTIDE SEQUENCE [LARGE SCALE GENOMIC DNA]</scope>
    <source>
        <strain>DSM 17343 / BCRC 17206 / CCUG 44338 / CIP 107171 / LMG 19424 / R1</strain>
    </source>
</reference>